<accession>P18525</accession>
<organism>
    <name type="scientific">Mus musculus</name>
    <name type="common">Mouse</name>
    <dbReference type="NCBI Taxonomy" id="10090"/>
    <lineage>
        <taxon>Eukaryota</taxon>
        <taxon>Metazoa</taxon>
        <taxon>Chordata</taxon>
        <taxon>Craniata</taxon>
        <taxon>Vertebrata</taxon>
        <taxon>Euteleostomi</taxon>
        <taxon>Mammalia</taxon>
        <taxon>Eutheria</taxon>
        <taxon>Euarchontoglires</taxon>
        <taxon>Glires</taxon>
        <taxon>Rodentia</taxon>
        <taxon>Myomorpha</taxon>
        <taxon>Muroidea</taxon>
        <taxon>Muridae</taxon>
        <taxon>Murinae</taxon>
        <taxon>Mus</taxon>
        <taxon>Mus</taxon>
    </lineage>
</organism>
<keyword id="KW-0002">3D-structure</keyword>
<keyword id="KW-1064">Adaptive immunity</keyword>
<keyword id="KW-1015">Disulfide bond</keyword>
<keyword id="KW-0391">Immunity</keyword>
<keyword id="KW-1280">Immunoglobulin</keyword>
<keyword id="KW-1185">Reference proteome</keyword>
<keyword id="KW-0732">Signal</keyword>
<dbReference type="PIR" id="JT0505">
    <property type="entry name" value="HVMS84"/>
</dbReference>
<dbReference type="PDB" id="1AR1">
    <property type="method" value="X-ray"/>
    <property type="resolution" value="2.70 A"/>
    <property type="chains" value="D=-"/>
</dbReference>
<dbReference type="PDB" id="1MQK">
    <property type="method" value="X-ray"/>
    <property type="resolution" value="1.28 A"/>
    <property type="chains" value="H=20-117"/>
</dbReference>
<dbReference type="PDB" id="3EHB">
    <property type="method" value="X-ray"/>
    <property type="resolution" value="2.32 A"/>
    <property type="chains" value="C=20-117"/>
</dbReference>
<dbReference type="PDB" id="3HB3">
    <property type="method" value="X-ray"/>
    <property type="resolution" value="2.25 A"/>
    <property type="chains" value="C=20-117"/>
</dbReference>
<dbReference type="PDBsum" id="1AR1"/>
<dbReference type="PDBsum" id="1MQK"/>
<dbReference type="PDBsum" id="3EHB"/>
<dbReference type="PDBsum" id="3HB3"/>
<dbReference type="SMR" id="P18525"/>
<dbReference type="FunCoup" id="P18525">
    <property type="interactions" value="645"/>
</dbReference>
<dbReference type="IntAct" id="P18525">
    <property type="interactions" value="1"/>
</dbReference>
<dbReference type="jPOST" id="P18525"/>
<dbReference type="PeptideAtlas" id="P18525"/>
<dbReference type="InParanoid" id="P18525"/>
<dbReference type="EvolutionaryTrace" id="P18525"/>
<dbReference type="Proteomes" id="UP000000589">
    <property type="component" value="Unplaced"/>
</dbReference>
<dbReference type="RNAct" id="P18525">
    <property type="molecule type" value="protein"/>
</dbReference>
<dbReference type="GO" id="GO:0005576">
    <property type="term" value="C:extracellular region"/>
    <property type="evidence" value="ECO:0007669"/>
    <property type="project" value="UniProtKB-ARBA"/>
</dbReference>
<dbReference type="GO" id="GO:0019814">
    <property type="term" value="C:immunoglobulin complex"/>
    <property type="evidence" value="ECO:0007669"/>
    <property type="project" value="UniProtKB-KW"/>
</dbReference>
<dbReference type="GO" id="GO:0003823">
    <property type="term" value="F:antigen binding"/>
    <property type="evidence" value="ECO:0000318"/>
    <property type="project" value="GO_Central"/>
</dbReference>
<dbReference type="GO" id="GO:0016064">
    <property type="term" value="P:immunoglobulin mediated immune response"/>
    <property type="evidence" value="ECO:0000318"/>
    <property type="project" value="GO_Central"/>
</dbReference>
<dbReference type="FunFam" id="2.60.40.10:FF:001423">
    <property type="entry name" value="Ig heavy chain V region 5-84"/>
    <property type="match status" value="1"/>
</dbReference>
<dbReference type="Gene3D" id="2.60.40.10">
    <property type="entry name" value="Immunoglobulins"/>
    <property type="match status" value="1"/>
</dbReference>
<dbReference type="InterPro" id="IPR007110">
    <property type="entry name" value="Ig-like_dom"/>
</dbReference>
<dbReference type="InterPro" id="IPR036179">
    <property type="entry name" value="Ig-like_dom_sf"/>
</dbReference>
<dbReference type="InterPro" id="IPR013783">
    <property type="entry name" value="Ig-like_fold"/>
</dbReference>
<dbReference type="InterPro" id="IPR013106">
    <property type="entry name" value="Ig_V-set"/>
</dbReference>
<dbReference type="InterPro" id="IPR050199">
    <property type="entry name" value="IgHV"/>
</dbReference>
<dbReference type="PANTHER" id="PTHR23266">
    <property type="entry name" value="IMMUNOGLOBULIN HEAVY CHAIN"/>
    <property type="match status" value="1"/>
</dbReference>
<dbReference type="Pfam" id="PF07686">
    <property type="entry name" value="V-set"/>
    <property type="match status" value="1"/>
</dbReference>
<dbReference type="SMART" id="SM00406">
    <property type="entry name" value="IGv"/>
    <property type="match status" value="1"/>
</dbReference>
<dbReference type="SUPFAM" id="SSF48726">
    <property type="entry name" value="Immunoglobulin"/>
    <property type="match status" value="1"/>
</dbReference>
<dbReference type="PROSITE" id="PS50835">
    <property type="entry name" value="IG_LIKE"/>
    <property type="match status" value="1"/>
</dbReference>
<evidence type="ECO:0000255" key="1">
    <source>
        <dbReference type="PROSITE-ProRule" id="PRU00114"/>
    </source>
</evidence>
<evidence type="ECO:0007829" key="2">
    <source>
        <dbReference type="PDB" id="1MQK"/>
    </source>
</evidence>
<evidence type="ECO:0007829" key="3">
    <source>
        <dbReference type="PDB" id="3EHB"/>
    </source>
</evidence>
<evidence type="ECO:0007829" key="4">
    <source>
        <dbReference type="PDB" id="3HB3"/>
    </source>
</evidence>
<sequence length="117" mass="12872">MNFGLSLIFLVLVLKGVLCEVKLVESGGGLVQPGGSLKLSCAASGFTFSSYTMSWVRQTPEKRLEWVAYISNGGGSTYYPDTVKGRFTISRDNAKNNLYLQMSSLKSEDTAMYYCAR</sequence>
<proteinExistence type="evidence at protein level"/>
<comment type="miscellaneous">
    <text>This sequence belongs to the VH7183 subfamily.</text>
</comment>
<name>HVM54_MOUSE</name>
<reference key="1">
    <citation type="journal article" date="1989" name="J. Exp. Med.">
        <title>Early onset of somatic mutation in immunoglobulin VH genes during the primary immune response.</title>
        <authorList>
            <person name="Levy N.S."/>
            <person name="Malipiero U.V."/>
            <person name="Lebecque S.G."/>
            <person name="Gearhart P.J."/>
        </authorList>
    </citation>
    <scope>NUCLEOTIDE SEQUENCE</scope>
    <source>
        <strain>BALB/cJ</strain>
    </source>
</reference>
<feature type="signal peptide">
    <location>
        <begin position="1"/>
        <end position="19"/>
    </location>
</feature>
<feature type="chain" id="PRO_0000015237" description="Ig heavy chain V region 5-84">
    <location>
        <begin position="20"/>
        <end position="117"/>
    </location>
</feature>
<feature type="region of interest" description="Framework-1">
    <location>
        <begin position="20"/>
        <end position="49"/>
    </location>
</feature>
<feature type="region of interest" description="Complementarity-determining-1">
    <location>
        <begin position="50"/>
        <end position="54"/>
    </location>
</feature>
<feature type="region of interest" description="Framework-2">
    <location>
        <begin position="55"/>
        <end position="68"/>
    </location>
</feature>
<feature type="region of interest" description="Complementarity-determining-2">
    <location>
        <begin position="69"/>
        <end position="85"/>
    </location>
</feature>
<feature type="region of interest" description="Framework-3">
    <location>
        <begin position="86"/>
        <end position="117"/>
    </location>
</feature>
<feature type="disulfide bond" evidence="1">
    <location>
        <begin position="41"/>
        <end position="115"/>
    </location>
</feature>
<feature type="non-terminal residue">
    <location>
        <position position="117"/>
    </location>
</feature>
<feature type="strand" evidence="2">
    <location>
        <begin position="22"/>
        <end position="26"/>
    </location>
</feature>
<feature type="strand" evidence="3">
    <location>
        <begin position="29"/>
        <end position="31"/>
    </location>
</feature>
<feature type="strand" evidence="2">
    <location>
        <begin position="37"/>
        <end position="46"/>
    </location>
</feature>
<feature type="helix" evidence="2">
    <location>
        <begin position="48"/>
        <end position="50"/>
    </location>
</feature>
<feature type="strand" evidence="2">
    <location>
        <begin position="53"/>
        <end position="58"/>
    </location>
</feature>
<feature type="strand" evidence="2">
    <location>
        <begin position="64"/>
        <end position="70"/>
    </location>
</feature>
<feature type="strand" evidence="4">
    <location>
        <begin position="72"/>
        <end position="75"/>
    </location>
</feature>
<feature type="turn" evidence="2">
    <location>
        <begin position="81"/>
        <end position="83"/>
    </location>
</feature>
<feature type="strand" evidence="2">
    <location>
        <begin position="87"/>
        <end position="92"/>
    </location>
</feature>
<feature type="helix" evidence="2">
    <location>
        <begin position="93"/>
        <end position="95"/>
    </location>
</feature>
<feature type="strand" evidence="2">
    <location>
        <begin position="97"/>
        <end position="102"/>
    </location>
</feature>
<feature type="helix" evidence="2">
    <location>
        <begin position="107"/>
        <end position="109"/>
    </location>
</feature>
<feature type="strand" evidence="2">
    <location>
        <begin position="111"/>
        <end position="117"/>
    </location>
</feature>
<protein>
    <recommendedName>
        <fullName>Ig heavy chain V region 5-84</fullName>
    </recommendedName>
</protein>